<name>H33_SCHPO</name>
<feature type="initiator methionine" description="Removed" evidence="1">
    <location>
        <position position="1"/>
    </location>
</feature>
<feature type="chain" id="PRO_0000221367" description="Histone H3.3">
    <location>
        <begin position="2"/>
        <end position="136"/>
    </location>
</feature>
<feature type="region of interest" description="Disordered" evidence="2">
    <location>
        <begin position="1"/>
        <end position="45"/>
    </location>
</feature>
<feature type="compositionally biased region" description="Low complexity" evidence="2">
    <location>
        <begin position="19"/>
        <end position="32"/>
    </location>
</feature>
<feature type="modified residue" description="N6,N6,N6-trimethyllysine; alternate" evidence="1">
    <location>
        <position position="5"/>
    </location>
</feature>
<feature type="modified residue" description="N6,N6-dimethyllysine; alternate" evidence="1">
    <location>
        <position position="5"/>
    </location>
</feature>
<feature type="modified residue" description="N6-methyllysine; alternate" evidence="1">
    <location>
        <position position="5"/>
    </location>
</feature>
<feature type="modified residue" description="N6-acetyllysine; alternate" evidence="1">
    <location>
        <position position="10"/>
    </location>
</feature>
<feature type="modified residue" description="N6-methyllysine; alternate" evidence="3">
    <location>
        <position position="10"/>
    </location>
</feature>
<feature type="modified residue" description="Phosphoserine" evidence="1">
    <location>
        <position position="11"/>
    </location>
</feature>
<feature type="modified residue" description="N6,N6-dimethyllysine; alternate" evidence="1">
    <location>
        <position position="15"/>
    </location>
</feature>
<feature type="modified residue" description="N6-acetyllysine; alternate" evidence="1">
    <location>
        <position position="15"/>
    </location>
</feature>
<feature type="modified residue" description="N6-acetyllysine; alternate" evidence="1">
    <location>
        <position position="19"/>
    </location>
</feature>
<feature type="modified residue" description="N6-methyllysine; alternate" evidence="1">
    <location>
        <position position="19"/>
    </location>
</feature>
<feature type="modified residue" description="N6-acetyllysine; alternate" evidence="1">
    <location>
        <position position="24"/>
    </location>
</feature>
<feature type="modified residue" description="N6-methyllysine; alternate" evidence="1">
    <location>
        <position position="24"/>
    </location>
</feature>
<feature type="modified residue" description="N6,N6,N6-trimethyllysine; alternate" evidence="1">
    <location>
        <position position="28"/>
    </location>
</feature>
<feature type="modified residue" description="N6,N6-dimethyllysine; alternate" evidence="1">
    <location>
        <position position="28"/>
    </location>
</feature>
<feature type="modified residue" description="N6-acetyllysine; alternate" evidence="1">
    <location>
        <position position="28"/>
    </location>
</feature>
<feature type="modified residue" description="N6-methyllysine; alternate" evidence="1">
    <location>
        <position position="28"/>
    </location>
</feature>
<feature type="modified residue" description="N6,N6,N6-trimethyllysine; alternate" evidence="4">
    <location>
        <position position="37"/>
    </location>
</feature>
<feature type="modified residue" description="N6,N6-dimethyllysine; alternate" evidence="4">
    <location>
        <position position="37"/>
    </location>
</feature>
<feature type="modified residue" description="N6-acetyllysine; alternate" evidence="1">
    <location>
        <position position="37"/>
    </location>
</feature>
<feature type="modified residue" description="N6-methyllysine; alternate" evidence="4">
    <location>
        <position position="37"/>
    </location>
</feature>
<feature type="modified residue" description="N6-acetyllysine" evidence="1">
    <location>
        <position position="57"/>
    </location>
</feature>
<feature type="modified residue" description="N6-acetyllysine" evidence="1">
    <location>
        <position position="65"/>
    </location>
</feature>
<feature type="modified residue" description="N6,N6,N6-trimethyllysine; alternate" evidence="1">
    <location>
        <position position="80"/>
    </location>
</feature>
<feature type="modified residue" description="N6,N6-dimethyllysine; alternate" evidence="1">
    <location>
        <position position="80"/>
    </location>
</feature>
<feature type="modified residue" description="N6-methyllysine; alternate" evidence="1">
    <location>
        <position position="80"/>
    </location>
</feature>
<feature type="modified residue" description="N6-acetyllysine" evidence="5">
    <location>
        <position position="123"/>
    </location>
</feature>
<feature type="mutagenesis site" description="Impairs transcriptional activation in vivo." evidence="5">
    <original>K</original>
    <variation>Q</variation>
    <location>
        <position position="123"/>
    </location>
</feature>
<proteinExistence type="evidence at protein level"/>
<evidence type="ECO:0000250" key="1"/>
<evidence type="ECO:0000256" key="2">
    <source>
        <dbReference type="SAM" id="MobiDB-lite"/>
    </source>
</evidence>
<evidence type="ECO:0000269" key="3">
    <source>
    </source>
</evidence>
<evidence type="ECO:0000269" key="4">
    <source>
    </source>
</evidence>
<evidence type="ECO:0000269" key="5">
    <source>
    </source>
</evidence>
<evidence type="ECO:0000305" key="6"/>
<reference key="1">
    <citation type="journal article" date="1985" name="EMBO J.">
        <title>Histone gene organization of fission yeast: a common upstream sequence.</title>
        <authorList>
            <person name="Matsumoto S."/>
            <person name="Yanagida M."/>
        </authorList>
    </citation>
    <scope>NUCLEOTIDE SEQUENCE [GENOMIC DNA]</scope>
</reference>
<reference key="2">
    <citation type="journal article" date="2002" name="Nature">
        <title>The genome sequence of Schizosaccharomyces pombe.</title>
        <authorList>
            <person name="Wood V."/>
            <person name="Gwilliam R."/>
            <person name="Rajandream M.A."/>
            <person name="Lyne M.H."/>
            <person name="Lyne R."/>
            <person name="Stewart A."/>
            <person name="Sgouros J.G."/>
            <person name="Peat N."/>
            <person name="Hayles J."/>
            <person name="Baker S.G."/>
            <person name="Basham D."/>
            <person name="Bowman S."/>
            <person name="Brooks K."/>
            <person name="Brown D."/>
            <person name="Brown S."/>
            <person name="Chillingworth T."/>
            <person name="Churcher C.M."/>
            <person name="Collins M."/>
            <person name="Connor R."/>
            <person name="Cronin A."/>
            <person name="Davis P."/>
            <person name="Feltwell T."/>
            <person name="Fraser A."/>
            <person name="Gentles S."/>
            <person name="Goble A."/>
            <person name="Hamlin N."/>
            <person name="Harris D.E."/>
            <person name="Hidalgo J."/>
            <person name="Hodgson G."/>
            <person name="Holroyd S."/>
            <person name="Hornsby T."/>
            <person name="Howarth S."/>
            <person name="Huckle E.J."/>
            <person name="Hunt S."/>
            <person name="Jagels K."/>
            <person name="James K.D."/>
            <person name="Jones L."/>
            <person name="Jones M."/>
            <person name="Leather S."/>
            <person name="McDonald S."/>
            <person name="McLean J."/>
            <person name="Mooney P."/>
            <person name="Moule S."/>
            <person name="Mungall K.L."/>
            <person name="Murphy L.D."/>
            <person name="Niblett D."/>
            <person name="Odell C."/>
            <person name="Oliver K."/>
            <person name="O'Neil S."/>
            <person name="Pearson D."/>
            <person name="Quail M.A."/>
            <person name="Rabbinowitsch E."/>
            <person name="Rutherford K.M."/>
            <person name="Rutter S."/>
            <person name="Saunders D."/>
            <person name="Seeger K."/>
            <person name="Sharp S."/>
            <person name="Skelton J."/>
            <person name="Simmonds M.N."/>
            <person name="Squares R."/>
            <person name="Squares S."/>
            <person name="Stevens K."/>
            <person name="Taylor K."/>
            <person name="Taylor R.G."/>
            <person name="Tivey A."/>
            <person name="Walsh S.V."/>
            <person name="Warren T."/>
            <person name="Whitehead S."/>
            <person name="Woodward J.R."/>
            <person name="Volckaert G."/>
            <person name="Aert R."/>
            <person name="Robben J."/>
            <person name="Grymonprez B."/>
            <person name="Weltjens I."/>
            <person name="Vanstreels E."/>
            <person name="Rieger M."/>
            <person name="Schaefer M."/>
            <person name="Mueller-Auer S."/>
            <person name="Gabel C."/>
            <person name="Fuchs M."/>
            <person name="Duesterhoeft A."/>
            <person name="Fritzc C."/>
            <person name="Holzer E."/>
            <person name="Moestl D."/>
            <person name="Hilbert H."/>
            <person name="Borzym K."/>
            <person name="Langer I."/>
            <person name="Beck A."/>
            <person name="Lehrach H."/>
            <person name="Reinhardt R."/>
            <person name="Pohl T.M."/>
            <person name="Eger P."/>
            <person name="Zimmermann W."/>
            <person name="Wedler H."/>
            <person name="Wambutt R."/>
            <person name="Purnelle B."/>
            <person name="Goffeau A."/>
            <person name="Cadieu E."/>
            <person name="Dreano S."/>
            <person name="Gloux S."/>
            <person name="Lelaure V."/>
            <person name="Mottier S."/>
            <person name="Galibert F."/>
            <person name="Aves S.J."/>
            <person name="Xiang Z."/>
            <person name="Hunt C."/>
            <person name="Moore K."/>
            <person name="Hurst S.M."/>
            <person name="Lucas M."/>
            <person name="Rochet M."/>
            <person name="Gaillardin C."/>
            <person name="Tallada V.A."/>
            <person name="Garzon A."/>
            <person name="Thode G."/>
            <person name="Daga R.R."/>
            <person name="Cruzado L."/>
            <person name="Jimenez J."/>
            <person name="Sanchez M."/>
            <person name="del Rey F."/>
            <person name="Benito J."/>
            <person name="Dominguez A."/>
            <person name="Revuelta J.L."/>
            <person name="Moreno S."/>
            <person name="Armstrong J."/>
            <person name="Forsburg S.L."/>
            <person name="Cerutti L."/>
            <person name="Lowe T."/>
            <person name="McCombie W.R."/>
            <person name="Paulsen I."/>
            <person name="Potashkin J."/>
            <person name="Shpakovski G.V."/>
            <person name="Ussery D."/>
            <person name="Barrell B.G."/>
            <person name="Nurse P."/>
        </authorList>
    </citation>
    <scope>NUCLEOTIDE SEQUENCE [LARGE SCALE GENOMIC DNA]</scope>
    <source>
        <strain>972 / ATCC 24843</strain>
    </source>
</reference>
<reference key="3">
    <citation type="journal article" date="2001" name="Science">
        <title>Role of histone H3 lysine 9 methylation in epigenetic control of heterochromatin assembly.</title>
        <authorList>
            <person name="Nakayama J."/>
            <person name="Rice J.C."/>
            <person name="Strahl B.D."/>
            <person name="Allis C.D."/>
            <person name="Grewal S.I.S."/>
        </authorList>
    </citation>
    <scope>METHYLATION AT LYS-10</scope>
</reference>
<reference key="4">
    <citation type="journal article" date="2005" name="Eukaryot. Cell">
        <title>Histone H3 K36 methylation is associated with transcription elongation in Schizosaccharomyces pombe.</title>
        <authorList>
            <person name="Morris S.A."/>
            <person name="Shibata Y."/>
            <person name="Noma K."/>
            <person name="Tsukamoto Y."/>
            <person name="Warren E."/>
            <person name="Temple B."/>
            <person name="Grewal S.I.S."/>
            <person name="Strahl B.D."/>
        </authorList>
    </citation>
    <scope>METHYLATION AT LYS-37</scope>
</reference>
<reference key="5">
    <citation type="journal article" date="2013" name="Cell">
        <title>Regulation of transcription through acetylation of H3K122 on the lateral surface of the histone octamer.</title>
        <authorList>
            <person name="Tropberger P."/>
            <person name="Pott S."/>
            <person name="Keller C."/>
            <person name="Kamieniarz-Gdula K."/>
            <person name="Caron M."/>
            <person name="Richter F."/>
            <person name="Li G."/>
            <person name="Mittler G."/>
            <person name="Liu E.T."/>
            <person name="Buhler M."/>
            <person name="Margueron R."/>
            <person name="Schneider R."/>
        </authorList>
    </citation>
    <scope>ACETYLATION AT LYS-123</scope>
    <scope>MUTAGENESIS OF LYS-123</scope>
</reference>
<organism>
    <name type="scientific">Schizosaccharomyces pombe (strain 972 / ATCC 24843)</name>
    <name type="common">Fission yeast</name>
    <dbReference type="NCBI Taxonomy" id="284812"/>
    <lineage>
        <taxon>Eukaryota</taxon>
        <taxon>Fungi</taxon>
        <taxon>Dikarya</taxon>
        <taxon>Ascomycota</taxon>
        <taxon>Taphrinomycotina</taxon>
        <taxon>Schizosaccharomycetes</taxon>
        <taxon>Schizosaccharomycetales</taxon>
        <taxon>Schizosaccharomycetaceae</taxon>
        <taxon>Schizosaccharomyces</taxon>
    </lineage>
</organism>
<sequence>MARTKQTARKSTGGKAPRKQLASKAARKAAPATGGVKKPHRYRPPTVALREIRRYQKSTELLIRKLPFQRLVREIAQDFKTDLRFQSSAIGALQEAVEAYLVSLFEDTNLCAIHGKRVTIQPKDMQLARRLRGERS</sequence>
<keyword id="KW-0007">Acetylation</keyword>
<keyword id="KW-0158">Chromosome</keyword>
<keyword id="KW-0238">DNA-binding</keyword>
<keyword id="KW-0488">Methylation</keyword>
<keyword id="KW-0544">Nucleosome core</keyword>
<keyword id="KW-0539">Nucleus</keyword>
<keyword id="KW-0597">Phosphoprotein</keyword>
<keyword id="KW-1185">Reference proteome</keyword>
<dbReference type="EMBL" id="X05224">
    <property type="protein sequence ID" value="CAA28854.1"/>
    <property type="molecule type" value="Genomic_DNA"/>
</dbReference>
<dbReference type="EMBL" id="CU329671">
    <property type="protein sequence ID" value="CAB50974.1"/>
    <property type="molecule type" value="Genomic_DNA"/>
</dbReference>
<dbReference type="RefSeq" id="NP_596467.1">
    <property type="nucleotide sequence ID" value="NM_001022386.2"/>
</dbReference>
<dbReference type="SMR" id="P10651"/>
<dbReference type="FunCoup" id="P10651">
    <property type="interactions" value="715"/>
</dbReference>
<dbReference type="IntAct" id="P10651">
    <property type="interactions" value="1"/>
</dbReference>
<dbReference type="STRING" id="284812.P10651"/>
<dbReference type="iPTMnet" id="P10651"/>
<dbReference type="GeneID" id="2539804"/>
<dbReference type="KEGG" id="spo:2539804"/>
<dbReference type="KEGG" id="spo:2541220"/>
<dbReference type="KEGG" id="spo:2542467"/>
<dbReference type="PomBase" id="SPBC1105.11c">
    <property type="gene designation" value="hht3"/>
</dbReference>
<dbReference type="HOGENOM" id="CLU_078295_4_0_1"/>
<dbReference type="InParanoid" id="P10651"/>
<dbReference type="PhylomeDB" id="P10651"/>
<dbReference type="Reactome" id="R-SPO-2299718">
    <property type="pathway name" value="Condensation of Prophase Chromosomes"/>
</dbReference>
<dbReference type="Reactome" id="R-SPO-2559580">
    <property type="pathway name" value="Oxidative Stress Induced Senescence"/>
</dbReference>
<dbReference type="Reactome" id="R-SPO-427359">
    <property type="pathway name" value="SIRT1 negatively regulates rRNA expression"/>
</dbReference>
<dbReference type="Reactome" id="R-SPO-5578749">
    <property type="pathway name" value="Transcriptional regulation by small RNAs"/>
</dbReference>
<dbReference type="Reactome" id="R-SPO-5625886">
    <property type="pathway name" value="Activated PKN1 stimulates transcription of AR (androgen receptor) regulated genes KLK2 and KLK3"/>
</dbReference>
<dbReference type="Reactome" id="R-SPO-68616">
    <property type="pathway name" value="Assembly of the ORC complex at the origin of replication"/>
</dbReference>
<dbReference type="Reactome" id="R-SPO-73772">
    <property type="pathway name" value="RNA Polymerase I Promoter Escape"/>
</dbReference>
<dbReference type="Reactome" id="R-SPO-9018519">
    <property type="pathway name" value="Estrogen-dependent gene expression"/>
</dbReference>
<dbReference type="Reactome" id="R-SPO-983231">
    <property type="pathway name" value="Factors involved in megakaryocyte development and platelet production"/>
</dbReference>
<dbReference type="PRO" id="PR:P10651"/>
<dbReference type="Proteomes" id="UP000002485">
    <property type="component" value="Chromosome II"/>
</dbReference>
<dbReference type="ExpressionAtlas" id="P10651">
    <property type="expression patterns" value="differential"/>
</dbReference>
<dbReference type="GO" id="GO:0000792">
    <property type="term" value="C:heterochromatin"/>
    <property type="evidence" value="ECO:0000314"/>
    <property type="project" value="PomBase"/>
</dbReference>
<dbReference type="GO" id="GO:0031934">
    <property type="term" value="C:mating-type region heterochromatin"/>
    <property type="evidence" value="ECO:0000314"/>
    <property type="project" value="PomBase"/>
</dbReference>
<dbReference type="GO" id="GO:0000786">
    <property type="term" value="C:nucleosome"/>
    <property type="evidence" value="ECO:0000255"/>
    <property type="project" value="PomBase"/>
</dbReference>
<dbReference type="GO" id="GO:0005634">
    <property type="term" value="C:nucleus"/>
    <property type="evidence" value="ECO:0000269"/>
    <property type="project" value="PomBase"/>
</dbReference>
<dbReference type="GO" id="GO:0005721">
    <property type="term" value="C:pericentric heterochromatin"/>
    <property type="evidence" value="ECO:0000314"/>
    <property type="project" value="PomBase"/>
</dbReference>
<dbReference type="GO" id="GO:0140720">
    <property type="term" value="C:subtelomeric heterochromatin"/>
    <property type="evidence" value="ECO:0000314"/>
    <property type="project" value="PomBase"/>
</dbReference>
<dbReference type="GO" id="GO:0140463">
    <property type="term" value="F:chromatin-protein adaptor activity"/>
    <property type="evidence" value="ECO:0000353"/>
    <property type="project" value="PomBase"/>
</dbReference>
<dbReference type="GO" id="GO:0003677">
    <property type="term" value="F:DNA binding"/>
    <property type="evidence" value="ECO:0000255"/>
    <property type="project" value="PomBase"/>
</dbReference>
<dbReference type="GO" id="GO:0046982">
    <property type="term" value="F:protein heterodimerization activity"/>
    <property type="evidence" value="ECO:0007669"/>
    <property type="project" value="InterPro"/>
</dbReference>
<dbReference type="GO" id="GO:0030527">
    <property type="term" value="F:structural constituent of chromatin"/>
    <property type="evidence" value="ECO:0007669"/>
    <property type="project" value="InterPro"/>
</dbReference>
<dbReference type="GO" id="GO:0006974">
    <property type="term" value="P:DNA damage response"/>
    <property type="evidence" value="ECO:0000315"/>
    <property type="project" value="PomBase"/>
</dbReference>
<dbReference type="GO" id="GO:0033696">
    <property type="term" value="P:heterochromatin boundary formation"/>
    <property type="evidence" value="ECO:0000315"/>
    <property type="project" value="PomBase"/>
</dbReference>
<dbReference type="GO" id="GO:0031507">
    <property type="term" value="P:heterochromatin formation"/>
    <property type="evidence" value="ECO:0000269"/>
    <property type="project" value="PomBase"/>
</dbReference>
<dbReference type="GO" id="GO:1990758">
    <property type="term" value="P:mitotic sister chromatid biorientation"/>
    <property type="evidence" value="ECO:0000315"/>
    <property type="project" value="PomBase"/>
</dbReference>
<dbReference type="GO" id="GO:0031508">
    <property type="term" value="P:pericentric heterochromatin formation"/>
    <property type="evidence" value="ECO:0000269"/>
    <property type="project" value="PomBase"/>
</dbReference>
<dbReference type="CDD" id="cd22911">
    <property type="entry name" value="HFD_H3"/>
    <property type="match status" value="1"/>
</dbReference>
<dbReference type="FunFam" id="1.10.20.10:FF:000010">
    <property type="entry name" value="Histone H3"/>
    <property type="match status" value="1"/>
</dbReference>
<dbReference type="Gene3D" id="1.10.20.10">
    <property type="entry name" value="Histone, subunit A"/>
    <property type="match status" value="1"/>
</dbReference>
<dbReference type="InterPro" id="IPR009072">
    <property type="entry name" value="Histone-fold"/>
</dbReference>
<dbReference type="InterPro" id="IPR007125">
    <property type="entry name" value="Histone_H2A/H2B/H3"/>
</dbReference>
<dbReference type="InterPro" id="IPR000164">
    <property type="entry name" value="Histone_H3/CENP-A"/>
</dbReference>
<dbReference type="PANTHER" id="PTHR11426">
    <property type="entry name" value="HISTONE H3"/>
    <property type="match status" value="1"/>
</dbReference>
<dbReference type="Pfam" id="PF00125">
    <property type="entry name" value="Histone"/>
    <property type="match status" value="1"/>
</dbReference>
<dbReference type="PRINTS" id="PR00622">
    <property type="entry name" value="HISTONEH3"/>
</dbReference>
<dbReference type="SMART" id="SM00428">
    <property type="entry name" value="H3"/>
    <property type="match status" value="1"/>
</dbReference>
<dbReference type="SUPFAM" id="SSF47113">
    <property type="entry name" value="Histone-fold"/>
    <property type="match status" value="1"/>
</dbReference>
<dbReference type="PROSITE" id="PS00322">
    <property type="entry name" value="HISTONE_H3_1"/>
    <property type="match status" value="1"/>
</dbReference>
<dbReference type="PROSITE" id="PS00959">
    <property type="entry name" value="HISTONE_H3_2"/>
    <property type="match status" value="1"/>
</dbReference>
<accession>P10651</accession>
<gene>
    <name type="primary">hht3</name>
    <name type="ORF">SPBC1105.11c</name>
</gene>
<protein>
    <recommendedName>
        <fullName>Histone H3.3</fullName>
    </recommendedName>
</protein>
<comment type="function">
    <text>Core component of nucleosome. Nucleosomes wrap and compact DNA into chromatin, limiting DNA accessibility to the cellular machineries which require DNA as a template. Histones thereby play a central role in transcription regulation, DNA repair, DNA replication and chromosomal stability. DNA accessibility is regulated via a complex set of post-translational modifications of histones, also called histone code, and nucleosome remodeling.</text>
</comment>
<comment type="subunit">
    <text>The nucleosome is a histone octamer containing two molecules each of H2A, H2B, H3 and H4 assembled in one H3-H4 heterotetramer and two H2A-H2B heterodimers. The octamer wraps approximately 147 bp of DNA.</text>
</comment>
<comment type="subcellular location">
    <subcellularLocation>
        <location evidence="1">Nucleus</location>
    </subcellularLocation>
    <subcellularLocation>
        <location evidence="1">Chromosome</location>
    </subcellularLocation>
</comment>
<comment type="PTM">
    <text>Phosphorylated by ark1 to form H3S10ph in a cell cycle-dependent manner during mitosis and meiosis. H3S10ph is also formed by ssp2, promotes subsequent H3K14ac formation by gcn5, and is required for transcriptional activation through TBP recruitment to the promoters. Dephosphorylation is performed by sds21.</text>
</comment>
<comment type="PTM">
    <text evidence="1">Mono-, di- and trimethylated by the COMPASS complex to form H3K4me1/2/3. H3K4me activates gene expression by regulating transcription elongation and plays a role in telomere length maintenance. H3K4me enrichment correlates with transcription levels, and occurs in a 5' to 3' gradient with H3K4me3 enrichment at the 5'-end of genes, shifting to H3K4me2 and then H3K4me1 (By similarity). Methylated by clr4 to form H3K9me1. H3K9me1 represents a specific tag for epigenetic transcriptional repression by recruiting swi6/HP1 to methylated histones. Targeting to histone probably involves clr3 and rik1. Essential for silencing of centromeres and directional switching of the mating type. Methylated by set2 to form H3K36me. H3K36me represses gene expression. Methylated by dot1 to form H3K79me. H3K79me is required for association of SIR proteins with telomeric regions and for telomeric silencing. The COMPASS-mediated formation of H3K4me2/3 and the dot1-mediated formation of H3K79me require H2BK123ub1 (By similarity).</text>
</comment>
<comment type="PTM">
    <text evidence="1 5">Acetylation of histone H3 leads to transcriptional activation. H3K14ac formation by gcn5 is promoted by H3S10ph. H3K14ac can also be formed by esa1. H3K56ac formation occurs predominantly in newly synthesized H3 molecules during G1, S and G2/M of the cell cycle and may be involved in DNA repair (By similarity). Acetylation at Lys-123 (H3K122ac) plays a central role in chromatin structure: localizes at the surface of the histone octamer and stimulates transcription, possibly by promoting nucleosome instability.</text>
</comment>
<comment type="similarity">
    <text evidence="6">Belongs to the histone H3 family.</text>
</comment>
<comment type="caution">
    <text evidence="6">To ensure consistency between histone entries, we follow the 'Brno' nomenclature for histone modifications, with positions referring to those used in the literature for the 'closest' model organism. Due to slight variations in histone sequences between organisms and to the presence of initiator methionine in UniProtKB/Swiss-Prot sequences, the actual positions of modified amino acids in the sequence generally differ. In this entry the following conventions are used: H3K4me1/2/3 = mono-, di- and trimethylated Lys-5; H3K9ac = acetylated Lys-10; H3K9me1 = monomethylated Lys-10; H3S10ph = phosphorylated Ser-11; H3K14ac = acetylated Lys-15; H3K14me2 = dimethylated Lys-15; H3K18ac = acetylated Lys-19; H3K18me1 = monomethylated Lys-19; H3K23ac = acetylated Lys-24; H3K23me1 = monomethylated Lys-24; H3K27ac = acetylated Lys-28; H3K27me1/2/3 = mono-, di- and trimethylated Lys-28; H3K36ac = acetylated Lys-37; H3K36me1/2/3 = mono-, di- and trimethylated Lys-37; H3K56ac = acetylated Lys-57; H3K64ac = acetylated Lys-65; H3K79me1/2/3 = mono-, di- and trimethylated Lys-80.</text>
</comment>